<organism>
    <name type="scientific">Sudan ebolavirus (strain Human/Uganda/Gulu/2000)</name>
    <name type="common">SEBOV</name>
    <name type="synonym">Sudan Ebola virus</name>
    <dbReference type="NCBI Taxonomy" id="386033"/>
    <lineage>
        <taxon>Viruses</taxon>
        <taxon>Riboviria</taxon>
        <taxon>Orthornavirae</taxon>
        <taxon>Negarnaviricota</taxon>
        <taxon>Haploviricotina</taxon>
        <taxon>Monjiviricetes</taxon>
        <taxon>Mononegavirales</taxon>
        <taxon>Filoviridae</taxon>
        <taxon>Orthoebolavirus</taxon>
        <taxon>Orthoebolavirus sudanense</taxon>
        <taxon>Sudan ebolavirus</taxon>
    </lineage>
</organism>
<gene>
    <name type="primary">NP</name>
</gene>
<reference key="1">
    <citation type="journal article" date="2005" name="Virus Res.">
        <title>Complete genome sequence of an Ebola virus (Sudan species) responsible for a 2000 outbreak of human disease in Uganda.</title>
        <authorList>
            <person name="Sanchez A."/>
            <person name="Rollin P.E."/>
        </authorList>
    </citation>
    <scope>NUCLEOTIDE SEQUENCE [GENOMIC RNA]</scope>
</reference>
<keyword id="KW-0002">3D-structure</keyword>
<keyword id="KW-0167">Capsid protein</keyword>
<keyword id="KW-0175">Coiled coil</keyword>
<keyword id="KW-1139">Helical capsid protein</keyword>
<keyword id="KW-1035">Host cytoplasm</keyword>
<keyword id="KW-0597">Phosphoprotein</keyword>
<keyword id="KW-0687">Ribonucleoprotein</keyword>
<keyword id="KW-0694">RNA-binding</keyword>
<keyword id="KW-0543">Viral nucleoprotein</keyword>
<keyword id="KW-0946">Virion</keyword>
<comment type="function">
    <text evidence="1">Oligomerizes into helical capsid to encapsidate the viral genome, protecting it from nucleases and the cellular innate immune response. VP35 binds to and stabilizes monomeric NP, keeping it soluble. Upon virus replication, NP is recruited to bind cooperatively viral genomic RNA and VP35 is released. The encapsidated genomic RNA is termed the nucleocapsid and serves as template for transcription and replication. The nucleocapsid is helical with a pitch of 10.81 NP per turn and a diameter of about 22nm. Each NP binds to six nucleotides of viral genomic RNA, three being exposed to the solvant and three hidden into the nucleocapsid. Also recruits host PPP2R5C phosphatase to dephosphorylate VP30 and thereby promote viral transcription. Upon virion assembly and budding, NP binds to VP24 and possibly host STAU1.</text>
</comment>
<comment type="subunit">
    <text evidence="1">Homooligomer. Homomultimerizes to form the nucleocapsid. Binds to viral genomic RNA. Interacts with VP35 and VP30 to form the nucleocapsid. Interacts with host PPP2R5C; this interaction leads to VP30 dephosphorylation and viral transcription. Interacts with VP24; this interaction facilitates nucleocapsid assembly and genome packaging. Interacts with matrix protein VP40; this interaction allows recruitment of the nucleocapsid into progeny virions. Interacts with host STAU1. Interacts with host NXF1 (via RNA-binding domain); this interaction recruits NXF1 to the inclusion bodies were viral replication takes place, probably to export viral mRNA-NXF1 complexes from these sites. Interacts with host CCDC92; this interaction sequesters NP in the host cytoplasm. Interacts with host TRIM14.</text>
</comment>
<comment type="subcellular location">
    <subcellularLocation>
        <location evidence="1">Virion</location>
    </subcellularLocation>
    <subcellularLocation>
        <location evidence="1">Host cytoplasm</location>
    </subcellularLocation>
</comment>
<comment type="domain">
    <text evidence="1">Comprizes a N-terminal arm involved in oligomerization, a NP core region involved in RNA binding, a disordered region follwoed by a C-terminal tail involved in protein-protein interactions. During oligomerization, NP N-terminal arm binds to a neighbor NP thereby displacing VP35 bound to monomeric NP.</text>
</comment>
<comment type="PTM">
    <text evidence="1">Phosphorylated and O-glycosylated by host. Acetylated by host EP300 in vitro.</text>
</comment>
<comment type="similarity">
    <text evidence="4">Belongs to the filoviruses nucleoprotein family.</text>
</comment>
<protein>
    <recommendedName>
        <fullName>Nucleoprotein</fullName>
    </recommendedName>
    <alternativeName>
        <fullName>Nucleocapsid protein</fullName>
        <shortName>Protein N</shortName>
    </alternativeName>
</protein>
<evidence type="ECO:0000250" key="1">
    <source>
        <dbReference type="UniProtKB" id="P18272"/>
    </source>
</evidence>
<evidence type="ECO:0000255" key="2"/>
<evidence type="ECO:0000256" key="3">
    <source>
        <dbReference type="SAM" id="MobiDB-lite"/>
    </source>
</evidence>
<evidence type="ECO:0000305" key="4"/>
<organismHost>
    <name type="scientific">Epomops franqueti</name>
    <name type="common">Franquet's epauletted fruit bat</name>
    <name type="synonym">Epomophorus franqueti</name>
    <dbReference type="NCBI Taxonomy" id="77231"/>
</organismHost>
<organismHost>
    <name type="scientific">Homo sapiens</name>
    <name type="common">Human</name>
    <dbReference type="NCBI Taxonomy" id="9606"/>
</organismHost>
<organismHost>
    <name type="scientific">Myonycteris torquata</name>
    <name type="common">Little collared fruit bat</name>
    <dbReference type="NCBI Taxonomy" id="77243"/>
</organismHost>
<dbReference type="EMBL" id="AY729654">
    <property type="protein sequence ID" value="AAU43883.1"/>
    <property type="molecule type" value="Genomic_RNA"/>
</dbReference>
<dbReference type="RefSeq" id="YP_138520.1">
    <property type="nucleotide sequence ID" value="NC_006432.1"/>
</dbReference>
<dbReference type="PDB" id="6OAF">
    <property type="method" value="X-ray"/>
    <property type="resolution" value="2.20 A"/>
    <property type="chains" value="A=34-367"/>
</dbReference>
<dbReference type="PDBsum" id="6OAF"/>
<dbReference type="SMR" id="Q5XX08"/>
<dbReference type="GeneID" id="3160777"/>
<dbReference type="KEGG" id="vg:3160777"/>
<dbReference type="Proteomes" id="UP000000277">
    <property type="component" value="Segment"/>
</dbReference>
<dbReference type="GO" id="GO:0019029">
    <property type="term" value="C:helical viral capsid"/>
    <property type="evidence" value="ECO:0007669"/>
    <property type="project" value="UniProtKB-KW"/>
</dbReference>
<dbReference type="GO" id="GO:0030430">
    <property type="term" value="C:host cell cytoplasm"/>
    <property type="evidence" value="ECO:0007669"/>
    <property type="project" value="UniProtKB-SubCell"/>
</dbReference>
<dbReference type="GO" id="GO:1990904">
    <property type="term" value="C:ribonucleoprotein complex"/>
    <property type="evidence" value="ECO:0007669"/>
    <property type="project" value="UniProtKB-KW"/>
</dbReference>
<dbReference type="GO" id="GO:0019013">
    <property type="term" value="C:viral nucleocapsid"/>
    <property type="evidence" value="ECO:0007669"/>
    <property type="project" value="UniProtKB-KW"/>
</dbReference>
<dbReference type="GO" id="GO:0003723">
    <property type="term" value="F:RNA binding"/>
    <property type="evidence" value="ECO:0007669"/>
    <property type="project" value="UniProtKB-KW"/>
</dbReference>
<dbReference type="GO" id="GO:0019074">
    <property type="term" value="P:viral RNA genome packaging"/>
    <property type="evidence" value="ECO:0007669"/>
    <property type="project" value="InterPro"/>
</dbReference>
<dbReference type="InterPro" id="IPR008609">
    <property type="entry name" value="Ebola_NP"/>
</dbReference>
<dbReference type="Pfam" id="PF05505">
    <property type="entry name" value="Ebola_NP"/>
    <property type="match status" value="1"/>
</dbReference>
<dbReference type="PIRSF" id="PIRSF003900">
    <property type="entry name" value="N_FiloV"/>
    <property type="match status" value="1"/>
</dbReference>
<name>NCAP_EBOSU</name>
<sequence length="738" mass="81805">MDKRVRGSWALGGQSEVDLDYHKILTAGLSVQQGIVRQRVIPVYVVSDLEGICQHIIQAFEAGVDFQDNADSFLLLLCLHHAYQGDHRLFLKSDAVQYLEGHGFRFEVREKENVHRLDELLPNVTGGKNLRRTLAAMPEEETTEANAGQFLSFASLFLPKLVVGEKACLEKVQRQIQVHAEQGLIQYPTSWQSVGHMMVIFRLMRTNFLIKFLLIHQGMHMVAGHDANDTVISNSVAQARFSGLLIVKTVLDHILQKTDLGVRLHPLARTAKVKNEVSSFKAALGSLAKHGEYAPFARLLNLSGVNNLEHGLYPQLSAIALGVATAHGSTLAGVNVGEQYQQLREAATEAEKQLQQYAETRELDNLGLDEQEKKILMSFHQKKNEISFQQTNAMVTLRKERLAKLTEAITTASKIKVGDRYPDDNDIPFPGPIYDETHPNPSDDNPDDSRDTTIPGGVVDPYDDESNNYPDYEDSAEGTTGDLDLFNLDDDDDDSQPGPPDRGQSKERAARTHGLQDPTLDGAKKVPELTPGSHQPGNLHITKPGSNTNQPQGNMSSTLQSMTPIQEESEPDDQKDDDDESLTSLDSEGDEDVESVSGENNPTVAPPAPVYKDTGVDTNQQNGPSNAVDGQGSESEALPINPEKGSALEETYYHLLKTQGPFEAINYYHLMSDEPIAFSTESGKEYIFPDSLEEAYPPWLSEKEALEKENRYLVIDGQQFLWPVMSLQDKFLAVLQHD</sequence>
<feature type="chain" id="PRO_0000245053" description="Nucleoprotein">
    <location>
        <begin position="1"/>
        <end position="738"/>
    </location>
</feature>
<feature type="region of interest" description="Disordered" evidence="3">
    <location>
        <begin position="418"/>
        <end position="640"/>
    </location>
</feature>
<feature type="coiled-coil region" evidence="2">
    <location>
        <begin position="334"/>
        <end position="363"/>
    </location>
</feature>
<feature type="compositionally biased region" description="Acidic residues" evidence="3">
    <location>
        <begin position="461"/>
        <end position="476"/>
    </location>
</feature>
<feature type="compositionally biased region" description="Polar residues" evidence="3">
    <location>
        <begin position="544"/>
        <end position="564"/>
    </location>
</feature>
<feature type="compositionally biased region" description="Acidic residues" evidence="3">
    <location>
        <begin position="567"/>
        <end position="594"/>
    </location>
</feature>
<feature type="compositionally biased region" description="Polar residues" evidence="3">
    <location>
        <begin position="616"/>
        <end position="625"/>
    </location>
</feature>
<proteinExistence type="evidence at protein level"/>
<accession>Q5XX08</accession>